<reference key="1">
    <citation type="journal article" date="2000" name="Nature">
        <title>Sequence and analysis of chromosome 1 of the plant Arabidopsis thaliana.</title>
        <authorList>
            <person name="Theologis A."/>
            <person name="Ecker J.R."/>
            <person name="Palm C.J."/>
            <person name="Federspiel N.A."/>
            <person name="Kaul S."/>
            <person name="White O."/>
            <person name="Alonso J."/>
            <person name="Altafi H."/>
            <person name="Araujo R."/>
            <person name="Bowman C.L."/>
            <person name="Brooks S.Y."/>
            <person name="Buehler E."/>
            <person name="Chan A."/>
            <person name="Chao Q."/>
            <person name="Chen H."/>
            <person name="Cheuk R.F."/>
            <person name="Chin C.W."/>
            <person name="Chung M.K."/>
            <person name="Conn L."/>
            <person name="Conway A.B."/>
            <person name="Conway A.R."/>
            <person name="Creasy T.H."/>
            <person name="Dewar K."/>
            <person name="Dunn P."/>
            <person name="Etgu P."/>
            <person name="Feldblyum T.V."/>
            <person name="Feng J.-D."/>
            <person name="Fong B."/>
            <person name="Fujii C.Y."/>
            <person name="Gill J.E."/>
            <person name="Goldsmith A.D."/>
            <person name="Haas B."/>
            <person name="Hansen N.F."/>
            <person name="Hughes B."/>
            <person name="Huizar L."/>
            <person name="Hunter J.L."/>
            <person name="Jenkins J."/>
            <person name="Johnson-Hopson C."/>
            <person name="Khan S."/>
            <person name="Khaykin E."/>
            <person name="Kim C.J."/>
            <person name="Koo H.L."/>
            <person name="Kremenetskaia I."/>
            <person name="Kurtz D.B."/>
            <person name="Kwan A."/>
            <person name="Lam B."/>
            <person name="Langin-Hooper S."/>
            <person name="Lee A."/>
            <person name="Lee J.M."/>
            <person name="Lenz C.A."/>
            <person name="Li J.H."/>
            <person name="Li Y.-P."/>
            <person name="Lin X."/>
            <person name="Liu S.X."/>
            <person name="Liu Z.A."/>
            <person name="Luros J.S."/>
            <person name="Maiti R."/>
            <person name="Marziali A."/>
            <person name="Militscher J."/>
            <person name="Miranda M."/>
            <person name="Nguyen M."/>
            <person name="Nierman W.C."/>
            <person name="Osborne B.I."/>
            <person name="Pai G."/>
            <person name="Peterson J."/>
            <person name="Pham P.K."/>
            <person name="Rizzo M."/>
            <person name="Rooney T."/>
            <person name="Rowley D."/>
            <person name="Sakano H."/>
            <person name="Salzberg S.L."/>
            <person name="Schwartz J.R."/>
            <person name="Shinn P."/>
            <person name="Southwick A.M."/>
            <person name="Sun H."/>
            <person name="Tallon L.J."/>
            <person name="Tambunga G."/>
            <person name="Toriumi M.J."/>
            <person name="Town C.D."/>
            <person name="Utterback T."/>
            <person name="Van Aken S."/>
            <person name="Vaysberg M."/>
            <person name="Vysotskaia V.S."/>
            <person name="Walker M."/>
            <person name="Wu D."/>
            <person name="Yu G."/>
            <person name="Fraser C.M."/>
            <person name="Venter J.C."/>
            <person name="Davis R.W."/>
        </authorList>
    </citation>
    <scope>NUCLEOTIDE SEQUENCE [LARGE SCALE GENOMIC DNA]</scope>
    <source>
        <strain>cv. Columbia</strain>
    </source>
</reference>
<reference key="2">
    <citation type="journal article" date="2017" name="Plant J.">
        <title>Araport11: a complete reannotation of the Arabidopsis thaliana reference genome.</title>
        <authorList>
            <person name="Cheng C.Y."/>
            <person name="Krishnakumar V."/>
            <person name="Chan A.P."/>
            <person name="Thibaud-Nissen F."/>
            <person name="Schobel S."/>
            <person name="Town C.D."/>
        </authorList>
    </citation>
    <scope>GENOME REANNOTATION</scope>
    <source>
        <strain>cv. Columbia</strain>
    </source>
</reference>
<reference key="3">
    <citation type="journal article" date="2003" name="Science">
        <title>Empirical analysis of transcriptional activity in the Arabidopsis genome.</title>
        <authorList>
            <person name="Yamada K."/>
            <person name="Lim J."/>
            <person name="Dale J.M."/>
            <person name="Chen H."/>
            <person name="Shinn P."/>
            <person name="Palm C.J."/>
            <person name="Southwick A.M."/>
            <person name="Wu H.C."/>
            <person name="Kim C.J."/>
            <person name="Nguyen M."/>
            <person name="Pham P.K."/>
            <person name="Cheuk R.F."/>
            <person name="Karlin-Newmann G."/>
            <person name="Liu S.X."/>
            <person name="Lam B."/>
            <person name="Sakano H."/>
            <person name="Wu T."/>
            <person name="Yu G."/>
            <person name="Miranda M."/>
            <person name="Quach H.L."/>
            <person name="Tripp M."/>
            <person name="Chang C.H."/>
            <person name="Lee J.M."/>
            <person name="Toriumi M.J."/>
            <person name="Chan M.M."/>
            <person name="Tang C.C."/>
            <person name="Onodera C.S."/>
            <person name="Deng J.M."/>
            <person name="Akiyama K."/>
            <person name="Ansari Y."/>
            <person name="Arakawa T."/>
            <person name="Banh J."/>
            <person name="Banno F."/>
            <person name="Bowser L."/>
            <person name="Brooks S.Y."/>
            <person name="Carninci P."/>
            <person name="Chao Q."/>
            <person name="Choy N."/>
            <person name="Enju A."/>
            <person name="Goldsmith A.D."/>
            <person name="Gurjal M."/>
            <person name="Hansen N.F."/>
            <person name="Hayashizaki Y."/>
            <person name="Johnson-Hopson C."/>
            <person name="Hsuan V.W."/>
            <person name="Iida K."/>
            <person name="Karnes M."/>
            <person name="Khan S."/>
            <person name="Koesema E."/>
            <person name="Ishida J."/>
            <person name="Jiang P.X."/>
            <person name="Jones T."/>
            <person name="Kawai J."/>
            <person name="Kamiya A."/>
            <person name="Meyers C."/>
            <person name="Nakajima M."/>
            <person name="Narusaka M."/>
            <person name="Seki M."/>
            <person name="Sakurai T."/>
            <person name="Satou M."/>
            <person name="Tamse R."/>
            <person name="Vaysberg M."/>
            <person name="Wallender E.K."/>
            <person name="Wong C."/>
            <person name="Yamamura Y."/>
            <person name="Yuan S."/>
            <person name="Shinozaki K."/>
            <person name="Davis R.W."/>
            <person name="Theologis A."/>
            <person name="Ecker J.R."/>
        </authorList>
    </citation>
    <scope>NUCLEOTIDE SEQUENCE [LARGE SCALE MRNA]</scope>
    <source>
        <strain>cv. Columbia</strain>
    </source>
</reference>
<reference key="4">
    <citation type="journal article" date="2005" name="Plant J.">
        <title>AtATG18a is required for the formation of autophagosomes during nutrient stress and senescence in Arabidopsis thaliana.</title>
        <authorList>
            <person name="Xiong Y."/>
            <person name="Contento A.L."/>
            <person name="Bassham D.C."/>
        </authorList>
    </citation>
    <scope>GENE FAMILY</scope>
    <scope>INDUCTION</scope>
    <scope>TISSUE SPECIFICITY</scope>
</reference>
<keyword id="KW-0072">Autophagy</keyword>
<keyword id="KW-0472">Membrane</keyword>
<keyword id="KW-0653">Protein transport</keyword>
<keyword id="KW-1185">Reference proteome</keyword>
<keyword id="KW-0677">Repeat</keyword>
<keyword id="KW-0813">Transport</keyword>
<keyword id="KW-0926">Vacuole</keyword>
<keyword id="KW-0853">WD repeat</keyword>
<name>AT18H_ARATH</name>
<evidence type="ECO:0000250" key="1"/>
<evidence type="ECO:0000256" key="2">
    <source>
        <dbReference type="SAM" id="MobiDB-lite"/>
    </source>
</evidence>
<evidence type="ECO:0000269" key="3">
    <source>
    </source>
</evidence>
<evidence type="ECO:0000305" key="4"/>
<feature type="chain" id="PRO_0000421886" description="Autophagy-related protein 18h">
    <location>
        <begin position="1"/>
        <end position="927"/>
    </location>
</feature>
<feature type="repeat" description="WD 1">
    <location>
        <begin position="379"/>
        <end position="419"/>
    </location>
</feature>
<feature type="repeat" description="WD 2">
    <location>
        <begin position="441"/>
        <end position="482"/>
    </location>
</feature>
<feature type="region of interest" description="Disordered" evidence="2">
    <location>
        <begin position="1"/>
        <end position="25"/>
    </location>
</feature>
<feature type="region of interest" description="Disordered" evidence="2">
    <location>
        <begin position="333"/>
        <end position="353"/>
    </location>
</feature>
<feature type="region of interest" description="Disordered" evidence="2">
    <location>
        <begin position="750"/>
        <end position="788"/>
    </location>
</feature>
<feature type="region of interest" description="Disordered" evidence="2">
    <location>
        <begin position="844"/>
        <end position="927"/>
    </location>
</feature>
<feature type="compositionally biased region" description="Low complexity" evidence="2">
    <location>
        <begin position="335"/>
        <end position="344"/>
    </location>
</feature>
<feature type="compositionally biased region" description="Low complexity" evidence="2">
    <location>
        <begin position="846"/>
        <end position="859"/>
    </location>
</feature>
<feature type="compositionally biased region" description="Basic and acidic residues" evidence="2">
    <location>
        <begin position="896"/>
        <end position="907"/>
    </location>
</feature>
<feature type="sequence conflict" description="In Ref. 3; AAK25932." evidence="4" ref="3">
    <original>S</original>
    <variation>N</variation>
    <location>
        <position position="847"/>
    </location>
</feature>
<dbReference type="EMBL" id="AC005388">
    <property type="protein sequence ID" value="AAC64884.1"/>
    <property type="status" value="ALT_SEQ"/>
    <property type="molecule type" value="Genomic_DNA"/>
</dbReference>
<dbReference type="EMBL" id="CP002684">
    <property type="protein sequence ID" value="AEE33137.1"/>
    <property type="molecule type" value="Genomic_DNA"/>
</dbReference>
<dbReference type="EMBL" id="AF360222">
    <property type="protein sequence ID" value="AAK25932.1"/>
    <property type="molecule type" value="mRNA"/>
</dbReference>
<dbReference type="EMBL" id="AY142626">
    <property type="protein sequence ID" value="AAN13084.1"/>
    <property type="molecule type" value="mRNA"/>
</dbReference>
<dbReference type="PIR" id="C96589">
    <property type="entry name" value="C96589"/>
</dbReference>
<dbReference type="RefSeq" id="NP_564664.1">
    <property type="nucleotide sequence ID" value="NM_104346.3"/>
</dbReference>
<dbReference type="SMR" id="Q8H1Q5"/>
<dbReference type="FunCoup" id="Q8H1Q5">
    <property type="interactions" value="618"/>
</dbReference>
<dbReference type="STRING" id="3702.Q8H1Q5"/>
<dbReference type="GlyGen" id="Q8H1Q5">
    <property type="glycosylation" value="2 sites"/>
</dbReference>
<dbReference type="iPTMnet" id="Q8H1Q5"/>
<dbReference type="PaxDb" id="3702-AT1G54710.1"/>
<dbReference type="ProteomicsDB" id="246524"/>
<dbReference type="EnsemblPlants" id="AT1G54710.1">
    <property type="protein sequence ID" value="AT1G54710.1"/>
    <property type="gene ID" value="AT1G54710"/>
</dbReference>
<dbReference type="GeneID" id="841912"/>
<dbReference type="Gramene" id="AT1G54710.1">
    <property type="protein sequence ID" value="AT1G54710.1"/>
    <property type="gene ID" value="AT1G54710"/>
</dbReference>
<dbReference type="KEGG" id="ath:AT1G54710"/>
<dbReference type="Araport" id="AT1G54710"/>
<dbReference type="TAIR" id="AT1G54710">
    <property type="gene designation" value="ATG18H"/>
</dbReference>
<dbReference type="eggNOG" id="KOG2109">
    <property type="taxonomic scope" value="Eukaryota"/>
</dbReference>
<dbReference type="HOGENOM" id="CLU_003829_1_0_1"/>
<dbReference type="InParanoid" id="Q8H1Q5"/>
<dbReference type="OMA" id="SIRYDWT"/>
<dbReference type="PhylomeDB" id="Q8H1Q5"/>
<dbReference type="PRO" id="PR:Q8H1Q5"/>
<dbReference type="Proteomes" id="UP000006548">
    <property type="component" value="Chromosome 1"/>
</dbReference>
<dbReference type="ExpressionAtlas" id="Q8H1Q5">
    <property type="expression patterns" value="baseline and differential"/>
</dbReference>
<dbReference type="GO" id="GO:0034045">
    <property type="term" value="C:phagophore assembly site membrane"/>
    <property type="evidence" value="ECO:0007669"/>
    <property type="project" value="UniProtKB-SubCell"/>
</dbReference>
<dbReference type="GO" id="GO:0005774">
    <property type="term" value="C:vacuolar membrane"/>
    <property type="evidence" value="ECO:0007669"/>
    <property type="project" value="UniProtKB-SubCell"/>
</dbReference>
<dbReference type="GO" id="GO:0006914">
    <property type="term" value="P:autophagy"/>
    <property type="evidence" value="ECO:0007669"/>
    <property type="project" value="UniProtKB-KW"/>
</dbReference>
<dbReference type="GO" id="GO:0015031">
    <property type="term" value="P:protein transport"/>
    <property type="evidence" value="ECO:0007669"/>
    <property type="project" value="UniProtKB-KW"/>
</dbReference>
<dbReference type="GO" id="GO:0042594">
    <property type="term" value="P:response to starvation"/>
    <property type="evidence" value="ECO:0000270"/>
    <property type="project" value="TAIR"/>
</dbReference>
<dbReference type="FunFam" id="2.130.10.10:FF:000782">
    <property type="entry name" value="Autophagy-related protein 18h"/>
    <property type="match status" value="1"/>
</dbReference>
<dbReference type="Gene3D" id="2.130.10.10">
    <property type="entry name" value="YVTN repeat-like/Quinoprotein amine dehydrogenase"/>
    <property type="match status" value="1"/>
</dbReference>
<dbReference type="InterPro" id="IPR045142">
    <property type="entry name" value="BCAS3-like"/>
</dbReference>
<dbReference type="InterPro" id="IPR022175">
    <property type="entry name" value="BCAS3_dom"/>
</dbReference>
<dbReference type="InterPro" id="IPR048382">
    <property type="entry name" value="BCAS3_WD40"/>
</dbReference>
<dbReference type="InterPro" id="IPR015943">
    <property type="entry name" value="WD40/YVTN_repeat-like_dom_sf"/>
</dbReference>
<dbReference type="InterPro" id="IPR036322">
    <property type="entry name" value="WD40_repeat_dom_sf"/>
</dbReference>
<dbReference type="InterPro" id="IPR001680">
    <property type="entry name" value="WD40_rpt"/>
</dbReference>
<dbReference type="PANTHER" id="PTHR13268:SF12">
    <property type="entry name" value="AUTOPHAGY-RELATED PROTEIN 18H"/>
    <property type="match status" value="1"/>
</dbReference>
<dbReference type="PANTHER" id="PTHR13268">
    <property type="entry name" value="BREAST CARCINOMA AMPLIFIED SEQUENCE 3"/>
    <property type="match status" value="1"/>
</dbReference>
<dbReference type="Pfam" id="PF12490">
    <property type="entry name" value="BCAS3"/>
    <property type="match status" value="1"/>
</dbReference>
<dbReference type="Pfam" id="PF21034">
    <property type="entry name" value="BCAS3_WD40"/>
    <property type="match status" value="2"/>
</dbReference>
<dbReference type="SMART" id="SM00320">
    <property type="entry name" value="WD40"/>
    <property type="match status" value="3"/>
</dbReference>
<dbReference type="SUPFAM" id="SSF50978">
    <property type="entry name" value="WD40 repeat-like"/>
    <property type="match status" value="1"/>
</dbReference>
<organism>
    <name type="scientific">Arabidopsis thaliana</name>
    <name type="common">Mouse-ear cress</name>
    <dbReference type="NCBI Taxonomy" id="3702"/>
    <lineage>
        <taxon>Eukaryota</taxon>
        <taxon>Viridiplantae</taxon>
        <taxon>Streptophyta</taxon>
        <taxon>Embryophyta</taxon>
        <taxon>Tracheophyta</taxon>
        <taxon>Spermatophyta</taxon>
        <taxon>Magnoliopsida</taxon>
        <taxon>eudicotyledons</taxon>
        <taxon>Gunneridae</taxon>
        <taxon>Pentapetalae</taxon>
        <taxon>rosids</taxon>
        <taxon>malvids</taxon>
        <taxon>Brassicales</taxon>
        <taxon>Brassicaceae</taxon>
        <taxon>Camelineae</taxon>
        <taxon>Arabidopsis</taxon>
    </lineage>
</organism>
<gene>
    <name type="primary">ATG18H</name>
    <name type="ordered locus">At1g54710</name>
    <name type="ORF">T22H22.14</name>
</gene>
<accession>Q8H1Q5</accession>
<accession>Q9C5I7</accession>
<accession>Q9ZVM1</accession>
<sequence length="927" mass="100514">MKSNSKVNINNNGDNHNQTKNNGTNGFLPNSLKFISTCIRTASSGVRSASASVAASLSSDSHELKDQVLWSSFDRLHTSESSFKNVLLLGYTNGFQVLDIDDSNDVTEFVSRRDDPVTFLQMQPLPAKCDGVEGFRSSHPILLAVADEAKGSGPIVTSRDGSVRNGYEDPLALSPTVVRFYSLRSHNYVHVLRFRSTVYMVRCSPRIVAVGLGSQIYCFDALTLENKFSVLSYPVPQLGNQGISGVNVGYGPMAVGARWLAYASNSPLSSSIGRLSPQNVTPPGVSPSTSPNNGNLVARYAMESSKHLAAGLLNLGDKGYKTISKYCQDLKHDGPGPSLSSSPGRKVGRVGSHSAESDVVGTVIVKDFESRAIIAQFRAHTSPISALCFDPSGTLLVTASIHGNNINVFRIMPTPTKNGPGAQSYDWSSSHVPLYKLHRGMTSAVIQDICFSSYSQWIAIVSSKSTCHIYVLSPFGGENVLEIRNSQFDGPTLAPTLSLPWWSSPSFMTTHFSYPPPASVTLSVVSRIKCNNFFHAASSVVGKPTFPSGCLAAVFHQSVPQESQSSSPALDYLLVYTPSGHVVQYKLIPSLGGDQAESNTRNGATSGLTSEEELRVKVEPVQCWDVCRRADWPEREENICGLTYGGRKNAELTVDTSDSEDQTKPLEKHHVYLANAEVLINSGRKPIWQNSEISFYPMYPPDSDGKNLNSHQGGGETEIGKVSANEVDIRRKDLLPVYDNFHSVYTSMRNRGFSGERDSDSSSSSDPGQVKEMHPFNGMVYPEDEERRGSAHFALTPNQNPHTGIVTFKQPVVSISSAVKDTDYIDDDAHVLPKNASLPAETKIENSSGISGDSNVSSNRSDMSMNAADEGEGPIDGSPNFEQFFEEVVSNETVTETEHKDAPSDGKLDDDEDDDMLGGVFAFSEEG</sequence>
<protein>
    <recommendedName>
        <fullName>Autophagy-related protein 18h</fullName>
        <shortName>AtATG18h</shortName>
    </recommendedName>
</protein>
<comment type="function">
    <text evidence="1">The PI(3,5)P2 regulatory complex regulates both the synthesis and turnover of phosphatidylinositol 3,5-bisphosphate (PtdIns(3,5)P2). Required for autophagy (By similarity).</text>
</comment>
<comment type="subunit">
    <text evidence="1">Component of the PI(3,5)P2 regulatory complex at least composed of ATG18, SAC/FIG4, FAB1 and VAC14.</text>
</comment>
<comment type="subcellular location">
    <subcellularLocation>
        <location evidence="1">Preautophagosomal structure membrane</location>
        <topology evidence="1">Peripheral membrane protein</topology>
    </subcellularLocation>
    <subcellularLocation>
        <location evidence="1">Vacuole membrane</location>
        <topology evidence="1">Peripheral membrane protein</topology>
    </subcellularLocation>
    <text evidence="1">Peripheral membrane protein of pre-autophagosomal structure (PAS) and vacuole.</text>
</comment>
<comment type="tissue specificity">
    <text evidence="3">Expressed in roots, flowers and leaves.</text>
</comment>
<comment type="induction">
    <text evidence="3">By sucrose and nitrogen starvation.</text>
</comment>
<comment type="domain">
    <text evidence="1">The first protein part may form a beta-propeller domain involved in specific binding to phosphatidylinositol 3,5-bisphosphate (PIP2), leading to the association of the protein to the membrane.</text>
</comment>
<comment type="similarity">
    <text evidence="4">Belongs to the WD repeat PROPPIN family.</text>
</comment>
<comment type="sequence caution" evidence="4">
    <conflict type="erroneous gene model prediction">
        <sequence resource="EMBL-CDS" id="AAC64884"/>
    </conflict>
</comment>
<proteinExistence type="evidence at transcript level"/>